<evidence type="ECO:0000255" key="1">
    <source>
        <dbReference type="HAMAP-Rule" id="MF_00175"/>
    </source>
</evidence>
<evidence type="ECO:0000255" key="2">
    <source>
        <dbReference type="PROSITE-ProRule" id="PRU01250"/>
    </source>
</evidence>
<evidence type="ECO:0000256" key="3">
    <source>
        <dbReference type="SAM" id="MobiDB-lite"/>
    </source>
</evidence>
<dbReference type="EMBL" id="CP001581">
    <property type="protein sequence ID" value="ACO86737.1"/>
    <property type="molecule type" value="Genomic_DNA"/>
</dbReference>
<dbReference type="RefSeq" id="WP_003357457.1">
    <property type="nucleotide sequence ID" value="NC_012563.1"/>
</dbReference>
<dbReference type="SMR" id="C1FLA5"/>
<dbReference type="GeneID" id="5187485"/>
<dbReference type="KEGG" id="cby:CLM_3642"/>
<dbReference type="eggNOG" id="COG1219">
    <property type="taxonomic scope" value="Bacteria"/>
</dbReference>
<dbReference type="HOGENOM" id="CLU_014218_8_2_9"/>
<dbReference type="Proteomes" id="UP000001374">
    <property type="component" value="Chromosome"/>
</dbReference>
<dbReference type="GO" id="GO:0009376">
    <property type="term" value="C:HslUV protease complex"/>
    <property type="evidence" value="ECO:0007669"/>
    <property type="project" value="TreeGrafter"/>
</dbReference>
<dbReference type="GO" id="GO:0005524">
    <property type="term" value="F:ATP binding"/>
    <property type="evidence" value="ECO:0007669"/>
    <property type="project" value="UniProtKB-UniRule"/>
</dbReference>
<dbReference type="GO" id="GO:0016887">
    <property type="term" value="F:ATP hydrolysis activity"/>
    <property type="evidence" value="ECO:0007669"/>
    <property type="project" value="InterPro"/>
</dbReference>
<dbReference type="GO" id="GO:0140662">
    <property type="term" value="F:ATP-dependent protein folding chaperone"/>
    <property type="evidence" value="ECO:0007669"/>
    <property type="project" value="InterPro"/>
</dbReference>
<dbReference type="GO" id="GO:0046983">
    <property type="term" value="F:protein dimerization activity"/>
    <property type="evidence" value="ECO:0007669"/>
    <property type="project" value="InterPro"/>
</dbReference>
<dbReference type="GO" id="GO:0051082">
    <property type="term" value="F:unfolded protein binding"/>
    <property type="evidence" value="ECO:0007669"/>
    <property type="project" value="UniProtKB-UniRule"/>
</dbReference>
<dbReference type="GO" id="GO:0008270">
    <property type="term" value="F:zinc ion binding"/>
    <property type="evidence" value="ECO:0007669"/>
    <property type="project" value="InterPro"/>
</dbReference>
<dbReference type="GO" id="GO:0051301">
    <property type="term" value="P:cell division"/>
    <property type="evidence" value="ECO:0007669"/>
    <property type="project" value="TreeGrafter"/>
</dbReference>
<dbReference type="GO" id="GO:0051603">
    <property type="term" value="P:proteolysis involved in protein catabolic process"/>
    <property type="evidence" value="ECO:0007669"/>
    <property type="project" value="TreeGrafter"/>
</dbReference>
<dbReference type="CDD" id="cd19497">
    <property type="entry name" value="RecA-like_ClpX"/>
    <property type="match status" value="1"/>
</dbReference>
<dbReference type="FunFam" id="1.10.8.60:FF:000002">
    <property type="entry name" value="ATP-dependent Clp protease ATP-binding subunit ClpX"/>
    <property type="match status" value="1"/>
</dbReference>
<dbReference type="FunFam" id="3.40.50.300:FF:000005">
    <property type="entry name" value="ATP-dependent Clp protease ATP-binding subunit ClpX"/>
    <property type="match status" value="1"/>
</dbReference>
<dbReference type="Gene3D" id="1.10.8.60">
    <property type="match status" value="1"/>
</dbReference>
<dbReference type="Gene3D" id="6.20.220.10">
    <property type="entry name" value="ClpX chaperone, C4-type zinc finger domain"/>
    <property type="match status" value="1"/>
</dbReference>
<dbReference type="Gene3D" id="3.40.50.300">
    <property type="entry name" value="P-loop containing nucleotide triphosphate hydrolases"/>
    <property type="match status" value="1"/>
</dbReference>
<dbReference type="HAMAP" id="MF_00175">
    <property type="entry name" value="ClpX"/>
    <property type="match status" value="1"/>
</dbReference>
<dbReference type="InterPro" id="IPR003593">
    <property type="entry name" value="AAA+_ATPase"/>
</dbReference>
<dbReference type="InterPro" id="IPR050052">
    <property type="entry name" value="ATP-dep_Clp_protease_ClpX"/>
</dbReference>
<dbReference type="InterPro" id="IPR003959">
    <property type="entry name" value="ATPase_AAA_core"/>
</dbReference>
<dbReference type="InterPro" id="IPR019489">
    <property type="entry name" value="Clp_ATPase_C"/>
</dbReference>
<dbReference type="InterPro" id="IPR004487">
    <property type="entry name" value="Clp_protease_ATP-bd_su_ClpX"/>
</dbReference>
<dbReference type="InterPro" id="IPR046425">
    <property type="entry name" value="ClpX_bact"/>
</dbReference>
<dbReference type="InterPro" id="IPR027417">
    <property type="entry name" value="P-loop_NTPase"/>
</dbReference>
<dbReference type="InterPro" id="IPR010603">
    <property type="entry name" value="Znf_CppX_C4"/>
</dbReference>
<dbReference type="InterPro" id="IPR038366">
    <property type="entry name" value="Znf_CppX_C4_sf"/>
</dbReference>
<dbReference type="NCBIfam" id="TIGR00382">
    <property type="entry name" value="clpX"/>
    <property type="match status" value="1"/>
</dbReference>
<dbReference type="NCBIfam" id="NF003745">
    <property type="entry name" value="PRK05342.1"/>
    <property type="match status" value="1"/>
</dbReference>
<dbReference type="PANTHER" id="PTHR48102:SF7">
    <property type="entry name" value="ATP-DEPENDENT CLP PROTEASE ATP-BINDING SUBUNIT CLPX-LIKE, MITOCHONDRIAL"/>
    <property type="match status" value="1"/>
</dbReference>
<dbReference type="PANTHER" id="PTHR48102">
    <property type="entry name" value="ATP-DEPENDENT CLP PROTEASE ATP-BINDING SUBUNIT CLPX-LIKE, MITOCHONDRIAL-RELATED"/>
    <property type="match status" value="1"/>
</dbReference>
<dbReference type="Pfam" id="PF07724">
    <property type="entry name" value="AAA_2"/>
    <property type="match status" value="1"/>
</dbReference>
<dbReference type="Pfam" id="PF10431">
    <property type="entry name" value="ClpB_D2-small"/>
    <property type="match status" value="1"/>
</dbReference>
<dbReference type="Pfam" id="PF06689">
    <property type="entry name" value="zf-C4_ClpX"/>
    <property type="match status" value="1"/>
</dbReference>
<dbReference type="SMART" id="SM00382">
    <property type="entry name" value="AAA"/>
    <property type="match status" value="1"/>
</dbReference>
<dbReference type="SMART" id="SM01086">
    <property type="entry name" value="ClpB_D2-small"/>
    <property type="match status" value="1"/>
</dbReference>
<dbReference type="SMART" id="SM00994">
    <property type="entry name" value="zf-C4_ClpX"/>
    <property type="match status" value="1"/>
</dbReference>
<dbReference type="SUPFAM" id="SSF57716">
    <property type="entry name" value="Glucocorticoid receptor-like (DNA-binding domain)"/>
    <property type="match status" value="1"/>
</dbReference>
<dbReference type="SUPFAM" id="SSF52540">
    <property type="entry name" value="P-loop containing nucleoside triphosphate hydrolases"/>
    <property type="match status" value="1"/>
</dbReference>
<dbReference type="PROSITE" id="PS51902">
    <property type="entry name" value="CLPX_ZB"/>
    <property type="match status" value="1"/>
</dbReference>
<reference key="1">
    <citation type="submission" date="2008-10" db="EMBL/GenBank/DDBJ databases">
        <title>Genome sequence of Clostridium botulinum A2 Kyoto.</title>
        <authorList>
            <person name="Shrivastava S."/>
            <person name="Brinkac L.M."/>
            <person name="Brown J.L."/>
            <person name="Bruce D."/>
            <person name="Detter C.C."/>
            <person name="Johnson E.A."/>
            <person name="Munk C.A."/>
            <person name="Smith L.A."/>
            <person name="Smith T.J."/>
            <person name="Sutton G."/>
            <person name="Brettin T.S."/>
        </authorList>
    </citation>
    <scope>NUCLEOTIDE SEQUENCE [LARGE SCALE GENOMIC DNA]</scope>
    <source>
        <strain>Kyoto / Type A2</strain>
    </source>
</reference>
<keyword id="KW-0067">ATP-binding</keyword>
<keyword id="KW-0143">Chaperone</keyword>
<keyword id="KW-0479">Metal-binding</keyword>
<keyword id="KW-0547">Nucleotide-binding</keyword>
<keyword id="KW-0862">Zinc</keyword>
<feature type="chain" id="PRO_1000123827" description="ATP-dependent Clp protease ATP-binding subunit ClpX">
    <location>
        <begin position="1"/>
        <end position="429"/>
    </location>
</feature>
<feature type="domain" description="ClpX-type ZB" evidence="2">
    <location>
        <begin position="1"/>
        <end position="53"/>
    </location>
</feature>
<feature type="region of interest" description="Disordered" evidence="3">
    <location>
        <begin position="408"/>
        <end position="429"/>
    </location>
</feature>
<feature type="compositionally biased region" description="Basic residues" evidence="3">
    <location>
        <begin position="413"/>
        <end position="423"/>
    </location>
</feature>
<feature type="binding site" evidence="2">
    <location>
        <position position="12"/>
    </location>
    <ligand>
        <name>Zn(2+)</name>
        <dbReference type="ChEBI" id="CHEBI:29105"/>
    </ligand>
</feature>
<feature type="binding site" evidence="2">
    <location>
        <position position="15"/>
    </location>
    <ligand>
        <name>Zn(2+)</name>
        <dbReference type="ChEBI" id="CHEBI:29105"/>
    </ligand>
</feature>
<feature type="binding site" evidence="2">
    <location>
        <position position="34"/>
    </location>
    <ligand>
        <name>Zn(2+)</name>
        <dbReference type="ChEBI" id="CHEBI:29105"/>
    </ligand>
</feature>
<feature type="binding site" evidence="2">
    <location>
        <position position="37"/>
    </location>
    <ligand>
        <name>Zn(2+)</name>
        <dbReference type="ChEBI" id="CHEBI:29105"/>
    </ligand>
</feature>
<feature type="binding site" evidence="1">
    <location>
        <begin position="116"/>
        <end position="123"/>
    </location>
    <ligand>
        <name>ATP</name>
        <dbReference type="ChEBI" id="CHEBI:30616"/>
    </ligand>
</feature>
<protein>
    <recommendedName>
        <fullName evidence="1">ATP-dependent Clp protease ATP-binding subunit ClpX</fullName>
    </recommendedName>
</protein>
<organism>
    <name type="scientific">Clostridium botulinum (strain Kyoto / Type A2)</name>
    <dbReference type="NCBI Taxonomy" id="536232"/>
    <lineage>
        <taxon>Bacteria</taxon>
        <taxon>Bacillati</taxon>
        <taxon>Bacillota</taxon>
        <taxon>Clostridia</taxon>
        <taxon>Eubacteriales</taxon>
        <taxon>Clostridiaceae</taxon>
        <taxon>Clostridium</taxon>
    </lineage>
</organism>
<gene>
    <name evidence="1" type="primary">clpX</name>
    <name type="ordered locus">CLM_3642</name>
</gene>
<sequence length="429" mass="47859">MSKLDEKKQLKCSFCGKTQDQVRRLIAGPGVYICDECIELCSEIINDEFEDDIQVDLTSLPKPTEIKTYLDQYVIGQEDAKKSLSVAVYNHYKRINSNTNNDDVELQKSNILLLGPTGSGKTLLAQTLAKFLNVPFAIADATTLTEAGYVGEDVENILLKLIQNADYDIEKAEKGIVYIDEIDKIARKSENPSITRDVSGEGVQQALLKILEGTVAAVPPQGGRKHPHQEFIQINTTNILFICGGAFDGVDKIIERRTRTSSLGFGAEIQSKKEKDLGKLLKDIMPGDLLKFGLIPEFIGRLPIVVTLDKLDREALIKILTEPKNALVKQYKKLFELDDVELEFNQEALKEIADEAINRNTGARGLRAIIEDMMREIMFDIPSQENIGKVIVNEDCIKTKKPELIEAEGGKRLPIKPKKGKKRKDSETA</sequence>
<name>CLPX_CLOBJ</name>
<proteinExistence type="inferred from homology"/>
<comment type="function">
    <text evidence="1">ATP-dependent specificity component of the Clp protease. It directs the protease to specific substrates. Can perform chaperone functions in the absence of ClpP.</text>
</comment>
<comment type="subunit">
    <text evidence="1">Component of the ClpX-ClpP complex. Forms a hexameric ring that, in the presence of ATP, binds to fourteen ClpP subunits assembled into a disk-like structure with a central cavity, resembling the structure of eukaryotic proteasomes.</text>
</comment>
<comment type="similarity">
    <text evidence="1">Belongs to the ClpX chaperone family.</text>
</comment>
<accession>C1FLA5</accession>